<protein>
    <recommendedName>
        <fullName evidence="1">Protein-export protein SecB</fullName>
    </recommendedName>
</protein>
<organism>
    <name type="scientific">Yersinia pestis bv. Antiqua (strain Antiqua)</name>
    <dbReference type="NCBI Taxonomy" id="360102"/>
    <lineage>
        <taxon>Bacteria</taxon>
        <taxon>Pseudomonadati</taxon>
        <taxon>Pseudomonadota</taxon>
        <taxon>Gammaproteobacteria</taxon>
        <taxon>Enterobacterales</taxon>
        <taxon>Yersiniaceae</taxon>
        <taxon>Yersinia</taxon>
    </lineage>
</organism>
<accession>Q1C285</accession>
<evidence type="ECO:0000255" key="1">
    <source>
        <dbReference type="HAMAP-Rule" id="MF_00821"/>
    </source>
</evidence>
<feature type="chain" id="PRO_1000062536" description="Protein-export protein SecB">
    <location>
        <begin position="1"/>
        <end position="158"/>
    </location>
</feature>
<gene>
    <name evidence="1" type="primary">secB</name>
    <name type="ordered locus">YPA_3475</name>
</gene>
<keyword id="KW-0143">Chaperone</keyword>
<keyword id="KW-0963">Cytoplasm</keyword>
<keyword id="KW-0653">Protein transport</keyword>
<keyword id="KW-0811">Translocation</keyword>
<keyword id="KW-0813">Transport</keyword>
<dbReference type="EMBL" id="CP000308">
    <property type="protein sequence ID" value="ABG15437.1"/>
    <property type="molecule type" value="Genomic_DNA"/>
</dbReference>
<dbReference type="RefSeq" id="WP_002208976.1">
    <property type="nucleotide sequence ID" value="NZ_CP009906.1"/>
</dbReference>
<dbReference type="SMR" id="Q1C285"/>
<dbReference type="GeneID" id="96663547"/>
<dbReference type="KEGG" id="ypa:YPA_3475"/>
<dbReference type="Proteomes" id="UP000001971">
    <property type="component" value="Chromosome"/>
</dbReference>
<dbReference type="GO" id="GO:0005737">
    <property type="term" value="C:cytoplasm"/>
    <property type="evidence" value="ECO:0007669"/>
    <property type="project" value="UniProtKB-SubCell"/>
</dbReference>
<dbReference type="GO" id="GO:0051082">
    <property type="term" value="F:unfolded protein binding"/>
    <property type="evidence" value="ECO:0007669"/>
    <property type="project" value="InterPro"/>
</dbReference>
<dbReference type="GO" id="GO:0006457">
    <property type="term" value="P:protein folding"/>
    <property type="evidence" value="ECO:0007669"/>
    <property type="project" value="UniProtKB-UniRule"/>
</dbReference>
<dbReference type="GO" id="GO:0051262">
    <property type="term" value="P:protein tetramerization"/>
    <property type="evidence" value="ECO:0007669"/>
    <property type="project" value="InterPro"/>
</dbReference>
<dbReference type="GO" id="GO:0015031">
    <property type="term" value="P:protein transport"/>
    <property type="evidence" value="ECO:0007669"/>
    <property type="project" value="UniProtKB-UniRule"/>
</dbReference>
<dbReference type="CDD" id="cd00557">
    <property type="entry name" value="Translocase_SecB"/>
    <property type="match status" value="1"/>
</dbReference>
<dbReference type="FunFam" id="3.10.420.10:FF:000001">
    <property type="entry name" value="Protein-export chaperone SecB"/>
    <property type="match status" value="1"/>
</dbReference>
<dbReference type="Gene3D" id="3.10.420.10">
    <property type="entry name" value="SecB-like"/>
    <property type="match status" value="1"/>
</dbReference>
<dbReference type="HAMAP" id="MF_00821">
    <property type="entry name" value="SecB"/>
    <property type="match status" value="1"/>
</dbReference>
<dbReference type="InterPro" id="IPR003708">
    <property type="entry name" value="SecB"/>
</dbReference>
<dbReference type="InterPro" id="IPR035958">
    <property type="entry name" value="SecB-like_sf"/>
</dbReference>
<dbReference type="NCBIfam" id="NF004390">
    <property type="entry name" value="PRK05751.1-1"/>
    <property type="match status" value="1"/>
</dbReference>
<dbReference type="NCBIfam" id="NF004393">
    <property type="entry name" value="PRK05751.1-4"/>
    <property type="match status" value="1"/>
</dbReference>
<dbReference type="NCBIfam" id="TIGR00809">
    <property type="entry name" value="secB"/>
    <property type="match status" value="1"/>
</dbReference>
<dbReference type="PANTHER" id="PTHR36918">
    <property type="match status" value="1"/>
</dbReference>
<dbReference type="PANTHER" id="PTHR36918:SF1">
    <property type="entry name" value="PROTEIN-EXPORT PROTEIN SECB"/>
    <property type="match status" value="1"/>
</dbReference>
<dbReference type="Pfam" id="PF02556">
    <property type="entry name" value="SecB"/>
    <property type="match status" value="1"/>
</dbReference>
<dbReference type="PRINTS" id="PR01594">
    <property type="entry name" value="SECBCHAPRONE"/>
</dbReference>
<dbReference type="SUPFAM" id="SSF54611">
    <property type="entry name" value="SecB-like"/>
    <property type="match status" value="1"/>
</dbReference>
<comment type="function">
    <text evidence="1">One of the proteins required for the normal export of preproteins out of the cell cytoplasm. It is a molecular chaperone that binds to a subset of precursor proteins, maintaining them in a translocation-competent state. It also specifically binds to its receptor SecA.</text>
</comment>
<comment type="subunit">
    <text evidence="1">Homotetramer, a dimer of dimers. One homotetramer interacts with 1 SecA dimer.</text>
</comment>
<comment type="subcellular location">
    <subcellularLocation>
        <location evidence="1">Cytoplasm</location>
    </subcellularLocation>
</comment>
<comment type="similarity">
    <text evidence="1">Belongs to the SecB family.</text>
</comment>
<reference key="1">
    <citation type="journal article" date="2006" name="J. Bacteriol.">
        <title>Complete genome sequence of Yersinia pestis strains Antiqua and Nepal516: evidence of gene reduction in an emerging pathogen.</title>
        <authorList>
            <person name="Chain P.S.G."/>
            <person name="Hu P."/>
            <person name="Malfatti S.A."/>
            <person name="Radnedge L."/>
            <person name="Larimer F."/>
            <person name="Vergez L.M."/>
            <person name="Worsham P."/>
            <person name="Chu M.C."/>
            <person name="Andersen G.L."/>
        </authorList>
    </citation>
    <scope>NUCLEOTIDE SEQUENCE [LARGE SCALE GENOMIC DNA]</scope>
    <source>
        <strain>Antiqua</strain>
    </source>
</reference>
<sequence>MSEQNNTEMAFQIQRIYTKDISFEAPNAPQVFQQDWQPEVKLDLDTASSQLAEDVYEVVLRVTVTASLGEETAFLCEVQQGGIFSVAGIEGTQLAHCLGAYCPNILFPYARECITSLVSRGTFPQLNLAPVNFDALFMNYLQQQAEGEVEGVEQRQDA</sequence>
<proteinExistence type="inferred from homology"/>
<name>SECB_YERPA</name>